<protein>
    <recommendedName>
        <fullName evidence="8">Non-reducing polyketide synthase epaA</fullName>
        <shortName evidence="8">NR-PKS epaA</shortName>
        <ecNumber evidence="7">2.3.1.-</ecNumber>
    </recommendedName>
    <alternativeName>
        <fullName evidence="8">Pestalamide A biosynthesis cluster protein A</fullName>
    </alternativeName>
</protein>
<reference key="1">
    <citation type="journal article" date="2007" name="Nat. Biotechnol.">
        <title>Genome sequencing and analysis of the versatile cell factory Aspergillus niger CBS 513.88.</title>
        <authorList>
            <person name="Pel H.J."/>
            <person name="de Winde J.H."/>
            <person name="Archer D.B."/>
            <person name="Dyer P.S."/>
            <person name="Hofmann G."/>
            <person name="Schaap P.J."/>
            <person name="Turner G."/>
            <person name="de Vries R.P."/>
            <person name="Albang R."/>
            <person name="Albermann K."/>
            <person name="Andersen M.R."/>
            <person name="Bendtsen J.D."/>
            <person name="Benen J.A.E."/>
            <person name="van den Berg M."/>
            <person name="Breestraat S."/>
            <person name="Caddick M.X."/>
            <person name="Contreras R."/>
            <person name="Cornell M."/>
            <person name="Coutinho P.M."/>
            <person name="Danchin E.G.J."/>
            <person name="Debets A.J.M."/>
            <person name="Dekker P."/>
            <person name="van Dijck P.W.M."/>
            <person name="van Dijk A."/>
            <person name="Dijkhuizen L."/>
            <person name="Driessen A.J.M."/>
            <person name="d'Enfert C."/>
            <person name="Geysens S."/>
            <person name="Goosen C."/>
            <person name="Groot G.S.P."/>
            <person name="de Groot P.W.J."/>
            <person name="Guillemette T."/>
            <person name="Henrissat B."/>
            <person name="Herweijer M."/>
            <person name="van den Hombergh J.P.T.W."/>
            <person name="van den Hondel C.A.M.J.J."/>
            <person name="van der Heijden R.T.J.M."/>
            <person name="van der Kaaij R.M."/>
            <person name="Klis F.M."/>
            <person name="Kools H.J."/>
            <person name="Kubicek C.P."/>
            <person name="van Kuyk P.A."/>
            <person name="Lauber J."/>
            <person name="Lu X."/>
            <person name="van der Maarel M.J.E.C."/>
            <person name="Meulenberg R."/>
            <person name="Menke H."/>
            <person name="Mortimer M.A."/>
            <person name="Nielsen J."/>
            <person name="Oliver S.G."/>
            <person name="Olsthoorn M."/>
            <person name="Pal K."/>
            <person name="van Peij N.N.M.E."/>
            <person name="Ram A.F.J."/>
            <person name="Rinas U."/>
            <person name="Roubos J.A."/>
            <person name="Sagt C.M.J."/>
            <person name="Schmoll M."/>
            <person name="Sun J."/>
            <person name="Ussery D."/>
            <person name="Varga J."/>
            <person name="Vervecken W."/>
            <person name="van de Vondervoort P.J.J."/>
            <person name="Wedler H."/>
            <person name="Woesten H.A.B."/>
            <person name="Zeng A.-P."/>
            <person name="van Ooyen A.J.J."/>
            <person name="Visser J."/>
            <person name="Stam H."/>
        </authorList>
    </citation>
    <scope>NUCLEOTIDE SEQUENCE [LARGE SCALE GENOMIC DNA]</scope>
    <source>
        <strain>ATCC MYA-4892 / CBS 513.88 / FGSC A1513</strain>
    </source>
</reference>
<reference key="2">
    <citation type="journal article" date="2018" name="Microbiol. Res.">
        <title>Deletion of the epigenetic regulator GcnE in Aspergillus niger FGSC A1279 activates the production of multiple polyketide metabolites.</title>
        <authorList>
            <person name="Wang B."/>
            <person name="Li X."/>
            <person name="Yu D."/>
            <person name="Chen X."/>
            <person name="Tabudravu J."/>
            <person name="Deng H."/>
            <person name="Pan L."/>
        </authorList>
    </citation>
    <scope>IDENTIFICATION</scope>
    <scope>DISRUPTION PHENOTYPE</scope>
    <scope>FUNCTION</scope>
    <scope>DOMAIN</scope>
    <scope>PATHWAY</scope>
</reference>
<proteinExistence type="inferred from homology"/>
<organism>
    <name type="scientific">Aspergillus niger (strain ATCC MYA-4892 / CBS 513.88 / FGSC A1513)</name>
    <dbReference type="NCBI Taxonomy" id="425011"/>
    <lineage>
        <taxon>Eukaryota</taxon>
        <taxon>Fungi</taxon>
        <taxon>Dikarya</taxon>
        <taxon>Ascomycota</taxon>
        <taxon>Pezizomycotina</taxon>
        <taxon>Eurotiomycetes</taxon>
        <taxon>Eurotiomycetidae</taxon>
        <taxon>Eurotiales</taxon>
        <taxon>Aspergillaceae</taxon>
        <taxon>Aspergillus</taxon>
        <taxon>Aspergillus subgen. Circumdati</taxon>
    </lineage>
</organism>
<dbReference type="EC" id="2.3.1.-" evidence="7"/>
<dbReference type="EMBL" id="AM270194">
    <property type="protein sequence ID" value="CAK40124.1"/>
    <property type="molecule type" value="Genomic_DNA"/>
</dbReference>
<dbReference type="SMR" id="A2QTE9"/>
<dbReference type="EnsemblFungi" id="CAK40124">
    <property type="protein sequence ID" value="CAK40124"/>
    <property type="gene ID" value="An09g01860"/>
</dbReference>
<dbReference type="VEuPathDB" id="FungiDB:An09g01860"/>
<dbReference type="HOGENOM" id="CLU_000022_6_2_1"/>
<dbReference type="Proteomes" id="UP000006706">
    <property type="component" value="Chromosome 1L"/>
</dbReference>
<dbReference type="GO" id="GO:0016746">
    <property type="term" value="F:acyltransferase activity"/>
    <property type="evidence" value="ECO:0007669"/>
    <property type="project" value="UniProtKB-KW"/>
</dbReference>
<dbReference type="GO" id="GO:0008168">
    <property type="term" value="F:methyltransferase activity"/>
    <property type="evidence" value="ECO:0007669"/>
    <property type="project" value="UniProtKB-KW"/>
</dbReference>
<dbReference type="GO" id="GO:0031177">
    <property type="term" value="F:phosphopantetheine binding"/>
    <property type="evidence" value="ECO:0007669"/>
    <property type="project" value="InterPro"/>
</dbReference>
<dbReference type="GO" id="GO:0009058">
    <property type="term" value="P:biosynthetic process"/>
    <property type="evidence" value="ECO:0007669"/>
    <property type="project" value="UniProtKB-ARBA"/>
</dbReference>
<dbReference type="GO" id="GO:0032259">
    <property type="term" value="P:methylation"/>
    <property type="evidence" value="ECO:0007669"/>
    <property type="project" value="UniProtKB-KW"/>
</dbReference>
<dbReference type="GO" id="GO:0019748">
    <property type="term" value="P:secondary metabolic process"/>
    <property type="evidence" value="ECO:0000303"/>
    <property type="project" value="AspGD"/>
</dbReference>
<dbReference type="CDD" id="cd00833">
    <property type="entry name" value="PKS"/>
    <property type="match status" value="1"/>
</dbReference>
<dbReference type="Gene3D" id="3.30.70.3290">
    <property type="match status" value="1"/>
</dbReference>
<dbReference type="Gene3D" id="3.40.47.10">
    <property type="match status" value="1"/>
</dbReference>
<dbReference type="Gene3D" id="1.10.1200.10">
    <property type="entry name" value="ACP-like"/>
    <property type="match status" value="1"/>
</dbReference>
<dbReference type="Gene3D" id="3.40.366.10">
    <property type="entry name" value="Malonyl-Coenzyme A Acyl Carrier Protein, domain 2"/>
    <property type="match status" value="2"/>
</dbReference>
<dbReference type="Gene3D" id="3.40.50.720">
    <property type="entry name" value="NAD(P)-binding Rossmann-like Domain"/>
    <property type="match status" value="1"/>
</dbReference>
<dbReference type="Gene3D" id="3.10.129.110">
    <property type="entry name" value="Polyketide synthase dehydratase"/>
    <property type="match status" value="1"/>
</dbReference>
<dbReference type="Gene3D" id="3.40.50.150">
    <property type="entry name" value="Vaccinia Virus protein VP39"/>
    <property type="match status" value="1"/>
</dbReference>
<dbReference type="InterPro" id="IPR001227">
    <property type="entry name" value="Ac_transferase_dom_sf"/>
</dbReference>
<dbReference type="InterPro" id="IPR036736">
    <property type="entry name" value="ACP-like_sf"/>
</dbReference>
<dbReference type="InterPro" id="IPR014043">
    <property type="entry name" value="Acyl_transferase_dom"/>
</dbReference>
<dbReference type="InterPro" id="IPR016035">
    <property type="entry name" value="Acyl_Trfase/lysoPLipase"/>
</dbReference>
<dbReference type="InterPro" id="IPR013120">
    <property type="entry name" value="Far_NAD-bd"/>
</dbReference>
<dbReference type="InterPro" id="IPR014031">
    <property type="entry name" value="Ketoacyl_synth_C"/>
</dbReference>
<dbReference type="InterPro" id="IPR014030">
    <property type="entry name" value="Ketoacyl_synth_N"/>
</dbReference>
<dbReference type="InterPro" id="IPR016036">
    <property type="entry name" value="Malonyl_transacylase_ACP-bd"/>
</dbReference>
<dbReference type="InterPro" id="IPR013217">
    <property type="entry name" value="Methyltransf_12"/>
</dbReference>
<dbReference type="InterPro" id="IPR036291">
    <property type="entry name" value="NAD(P)-bd_dom_sf"/>
</dbReference>
<dbReference type="InterPro" id="IPR020841">
    <property type="entry name" value="PKS_Beta-ketoAc_synthase_dom"/>
</dbReference>
<dbReference type="InterPro" id="IPR042104">
    <property type="entry name" value="PKS_dehydratase_sf"/>
</dbReference>
<dbReference type="InterPro" id="IPR049900">
    <property type="entry name" value="PKS_mFAS_DH"/>
</dbReference>
<dbReference type="InterPro" id="IPR020806">
    <property type="entry name" value="PKS_PP-bd"/>
</dbReference>
<dbReference type="InterPro" id="IPR050444">
    <property type="entry name" value="Polyketide_Synthase"/>
</dbReference>
<dbReference type="InterPro" id="IPR009081">
    <property type="entry name" value="PP-bd_ACP"/>
</dbReference>
<dbReference type="InterPro" id="IPR006162">
    <property type="entry name" value="Ppantetheine_attach_site"/>
</dbReference>
<dbReference type="InterPro" id="IPR029063">
    <property type="entry name" value="SAM-dependent_MTases_sf"/>
</dbReference>
<dbReference type="InterPro" id="IPR032088">
    <property type="entry name" value="SAT"/>
</dbReference>
<dbReference type="InterPro" id="IPR016039">
    <property type="entry name" value="Thiolase-like"/>
</dbReference>
<dbReference type="PANTHER" id="PTHR45681:SF6">
    <property type="entry name" value="POLYKETIDE SYNTHASE 37"/>
    <property type="match status" value="1"/>
</dbReference>
<dbReference type="PANTHER" id="PTHR45681">
    <property type="entry name" value="POLYKETIDE SYNTHASE 44-RELATED"/>
    <property type="match status" value="1"/>
</dbReference>
<dbReference type="Pfam" id="PF00698">
    <property type="entry name" value="Acyl_transf_1"/>
    <property type="match status" value="1"/>
</dbReference>
<dbReference type="Pfam" id="PF18558">
    <property type="entry name" value="HTH_51"/>
    <property type="match status" value="1"/>
</dbReference>
<dbReference type="Pfam" id="PF00109">
    <property type="entry name" value="ketoacyl-synt"/>
    <property type="match status" value="1"/>
</dbReference>
<dbReference type="Pfam" id="PF02801">
    <property type="entry name" value="Ketoacyl-synt_C"/>
    <property type="match status" value="1"/>
</dbReference>
<dbReference type="Pfam" id="PF08242">
    <property type="entry name" value="Methyltransf_12"/>
    <property type="match status" value="1"/>
</dbReference>
<dbReference type="Pfam" id="PF07993">
    <property type="entry name" value="NAD_binding_4"/>
    <property type="match status" value="1"/>
</dbReference>
<dbReference type="Pfam" id="PF00550">
    <property type="entry name" value="PP-binding"/>
    <property type="match status" value="1"/>
</dbReference>
<dbReference type="Pfam" id="PF16073">
    <property type="entry name" value="SAT"/>
    <property type="match status" value="1"/>
</dbReference>
<dbReference type="SMART" id="SM00827">
    <property type="entry name" value="PKS_AT"/>
    <property type="match status" value="1"/>
</dbReference>
<dbReference type="SMART" id="SM00825">
    <property type="entry name" value="PKS_KS"/>
    <property type="match status" value="1"/>
</dbReference>
<dbReference type="SMART" id="SM00823">
    <property type="entry name" value="PKS_PP"/>
    <property type="match status" value="1"/>
</dbReference>
<dbReference type="SMART" id="SM01294">
    <property type="entry name" value="PKS_PP_betabranch"/>
    <property type="match status" value="1"/>
</dbReference>
<dbReference type="SUPFAM" id="SSF47336">
    <property type="entry name" value="ACP-like"/>
    <property type="match status" value="1"/>
</dbReference>
<dbReference type="SUPFAM" id="SSF52151">
    <property type="entry name" value="FabD/lysophospholipase-like"/>
    <property type="match status" value="1"/>
</dbReference>
<dbReference type="SUPFAM" id="SSF51735">
    <property type="entry name" value="NAD(P)-binding Rossmann-fold domains"/>
    <property type="match status" value="1"/>
</dbReference>
<dbReference type="SUPFAM" id="SSF55048">
    <property type="entry name" value="Probable ACP-binding domain of malonyl-CoA ACP transacylase"/>
    <property type="match status" value="1"/>
</dbReference>
<dbReference type="SUPFAM" id="SSF53335">
    <property type="entry name" value="S-adenosyl-L-methionine-dependent methyltransferases"/>
    <property type="match status" value="1"/>
</dbReference>
<dbReference type="SUPFAM" id="SSF53901">
    <property type="entry name" value="Thiolase-like"/>
    <property type="match status" value="1"/>
</dbReference>
<dbReference type="PROSITE" id="PS50075">
    <property type="entry name" value="CARRIER"/>
    <property type="match status" value="1"/>
</dbReference>
<dbReference type="PROSITE" id="PS52004">
    <property type="entry name" value="KS3_2"/>
    <property type="match status" value="1"/>
</dbReference>
<dbReference type="PROSITE" id="PS00012">
    <property type="entry name" value="PHOSPHOPANTETHEINE"/>
    <property type="match status" value="1"/>
</dbReference>
<dbReference type="PROSITE" id="PS52019">
    <property type="entry name" value="PKS_MFAS_DH"/>
    <property type="match status" value="1"/>
</dbReference>
<gene>
    <name evidence="8" type="primary">epaA</name>
    <name type="ORF">An09g01860</name>
</gene>
<name>EPAA_ASPNC</name>
<sequence>MVTTTRATNPTNTLLLFGPQALSFSTATFADIHARVVQTSENAWIKQTITSLPGLWDALVKEFPQYGALEGKQLLRDLDRWFETGTMEHAEPHLPNILLSPMVVITQLTEYVDYLKTMPHAADQQTETVGFCTGLLTALAASLASDIKGIRQYGAIAIKLAMIIGAVVDVQDITSPNGPSKSLAVAWDSAETQDRLNQIIDQSPEVYISVEYDYNRATITTAARSISSLQQRLRNAGLIASEIGLRGRFHCACYKNDIEALSKFCDSVPSLCLPDAAVLVLPTRSNDAGSFILSGKLHHCALRSILLDTSHWYQTLEVIRQSCLKSPSSMVVSFGPERCIPPSILKGLSSIVTTAAEYQPSYLHRDPELCNPNEIAVIGMSCKVAGADDVDEFWDLLCKAESQHQEVPKERFGFESAFREVDPTRKWYGNFINEHDCFDHKFFKKSAREIAATDPQQRQMLQVAYQAVEQSGYFTTPKSDKDRKIGCYIGVCAADYEYNVACHPPNAFMATGNLKSFVAGKISHWFGWTGPGLCIDTACSSSLVAVHQACQAILTGDCTAALAGGANIITHPLWYQNLAAASFLSPTGQCKPFDASADGYCRGEGFAAVFLKKMSAAIADGDMIIGSIKATAVNQNQNCTPVFVPNAPTLSDLFRDVLDRSQLTANQITVVEAHGTGTQVGDPAEYQSIRNVLGGPSRSTPLLFGSVKGLVGHTECTSGAVSLVKTLLMQQHEAIPPQPSFDRLNPEIPVSESDNMQIATRFSPWTAEYRAALINNYGACGSNASMVVAQAPRTEQRRSATRRTSVVLDYPFRLCGSDDRALRAYSERLLRFIASGIKDGISVADLAFNVCRQSNPTLDRSLAFACRTTQEVEEKLRAFVAGNQGLIATSRSKTPREVILCFGGQISNYVGLDREVYDNVALLRKHLAICDAACRDLGVDSIFPGIFQKSPISDPVKLQTILFSTQYSSAKAWMDSGVRPVAAVGHSFGELTALCATGILSLADAMKMIVGRATVIRDFWGEDKGSMIAVEADENRVQRLLAEAAKQCELIHARAPTIACVNGPTSYTLAGPVKSIDIVTEVISKLSDSGPSIRSKRLKVTNAFHSTLVEPLMEELEKVGQHLTFNTPTMQLERAIKHYSDATLTSDYVYDHMRNPVYFNQAVQRLAQQYPDSVWLEAGSNSTITSMASRALGSPRSLHFQAVNITSDDSWSMLITSTLSLWKQGISTNFWAYHAEQTYEYNPVLLPPYQFEPSRHWMELKVPSSMNNGKVQCGARDEEGPPKTLWSLIEASDKVARFQINTAAPKYVELVSGHVIANTAPICPATVEVDIVVEALRSLRPDFMDSNLQPQVLAVTNQSPICIDPNRSVWLECQAMDSNSVWEWRIVSDSLQEPGTSSSAHVLGKLAFLSGQDEVKQQESEFMRLERLIGHQRCVDLLNTTEADDIIQGRNIYTTFAGVVDYGEQYRGLKKIVGKGLESAGRVQKKPSEESWLDAHLGDCFSQVGGIWVNCMTDHNPDDMFIATGFEKWVRSPALRHGQPRSEIWDVLACHHRSSEQTYLTDIFIFDAEQGALTEVILGINYHKVAKASMSKILSRLSGTEAAPSSSTRAHPTSSSSPRLPGPSVPEDKSQNETQPAGTNAVAKKKSEKSAQQNVLEKTRALLAEISGLEPSEIEAETGLADIGIDSLMGMELARDLEALFKCPLLGDELANVTTFQGLVEYVQSAVGVPTNGDEPDNTNADEVSEEDNLAPSPSSSSSSTNLTEDSSLDQAETTTNISSYPGQTKTEKPAMPPASSKTLELSPSWVLEAFEESKRLTDHFIEQYRCANYVDTTLPKQTQLCVALTVEAFEQLGCPIRTAVAGQKLERIIHIPKHAQLAQYLYRLLSADARLIDLTEDGRITRTHMALPKPSDQILQDLLRLYPDHEWANRLAAFTGARLAEVLKGETDGLGLIFGTDEGRELVAGLYGDSLLNKLSYRQMEDIITRLASRIPRDSGPLKILEMGAGTGGTTKGMAPLLARLGIPVEYTFTDLSGSFVAAARKKYQKEYPFMKFQVHDIEKPPSDQLRHSQHIVIASNAIHATHSLTDSSRHVREFLKTDGFLMIVEMTQPVHWVDIIFGLFDGWWLFADGRDHAIASAGWWEKVFQSVGYGQVDWTDGHRPEVQIQRVIIAFASGPRYGRQPLPPAPPPNLVPGSHASRQAAVNEYLDKYTKGFTLPAQTSNPDISNSTSYWEKQCVLITGATGSLGVHLVAAVAALDDVQTVICLNRRSPMDPDLRQQQAFERRGILLEAASMSKIRVLQTDSSKPQLGLTDEVYSSLVTSTTHIIHNAWPMTGKRPLSGLEQQFQVMRNLLDLAAQCSSTRPANVPRIVFQFISSIATVGYYPLWSGQTLVPETCMGIESVLANGYGEAKYVCEQMLDRTLHQYPDRFRAMAVRLGQIAGSRTSGYWNPMEHLSFLFKSAQTLQVFPDFTGDLCWTPVNDVAATLSDLLLLSPHSSSMTDQPIYHIDNPVRQSWSEMVPVLIDALGIPAQNVFPFADWVCRVRAFPGQVEWDNPAALLIDFLDDHFLRMSCGGLLLDTKRACEHSPTLAAVGPVTAELARKYIQSWKEMGFLNP</sequence>
<keyword id="KW-0012">Acyltransferase</keyword>
<keyword id="KW-0489">Methyltransferase</keyword>
<keyword id="KW-0511">Multifunctional enzyme</keyword>
<keyword id="KW-0521">NADP</keyword>
<keyword id="KW-0596">Phosphopantetheine</keyword>
<keyword id="KW-0597">Phosphoprotein</keyword>
<keyword id="KW-1185">Reference proteome</keyword>
<keyword id="KW-0808">Transferase</keyword>
<evidence type="ECO:0000250" key="1">
    <source>
        <dbReference type="UniProtKB" id="A0A0K0MCJ4"/>
    </source>
</evidence>
<evidence type="ECO:0000255" key="2"/>
<evidence type="ECO:0000255" key="3">
    <source>
        <dbReference type="PROSITE-ProRule" id="PRU00258"/>
    </source>
</evidence>
<evidence type="ECO:0000255" key="4">
    <source>
        <dbReference type="PROSITE-ProRule" id="PRU01348"/>
    </source>
</evidence>
<evidence type="ECO:0000255" key="5">
    <source>
        <dbReference type="PROSITE-ProRule" id="PRU01363"/>
    </source>
</evidence>
<evidence type="ECO:0000256" key="6">
    <source>
        <dbReference type="SAM" id="MobiDB-lite"/>
    </source>
</evidence>
<evidence type="ECO:0000269" key="7">
    <source>
    </source>
</evidence>
<evidence type="ECO:0000303" key="8">
    <source>
    </source>
</evidence>
<evidence type="ECO:0000305" key="9">
    <source>
    </source>
</evidence>
<comment type="function">
    <text evidence="7 9">Non-reducing polyketide synthase; part of the gene cluster that mediates the biosynthesis of nigerpyrone and its derivatives carbonarone A and pestalamide A (PubMed:30384904). The biosynthesis pathway begins with the polyketide assembly by epaA to form phenylacetyl triketide precursor from successive condensation of two malonyl-CoA, presumably with one phenylacetyl-CoA starter unit produced by the phenylacetyl-CoA ligase epaB (PubMed:30384904). For the nigerpyrone biosynthesis, the reactive polyketide chain is released as an aldehyde through the R-domain. A nonenzymatic cyclization and dehydration may create nigerpyrone (PubMed:30384904). For the biosynthesis of carbonarone A and pestalamide A, an extra methyl group is added through the C-methyltransferase domain. Several further steps involving the dehydrogenase orf1, the cytochrome P450 monooxygenase orf2 and the FAD-dependent monooxygenase orf3 are required to form a carbonarone A precursor which is converted to carbonarone A via cyclization (PubMed:30384904). The O-acetyltransferase epaC could catalyze the transfer of 2-methylsuccinyl-CoA, a common intermediate in the ethylmalonyl-CoA pathway, to generate the final product pestalamide A (Probable).</text>
</comment>
<comment type="cofactor">
    <cofactor evidence="2">
        <name>pantetheine 4'-phosphate</name>
        <dbReference type="ChEBI" id="CHEBI:47942"/>
    </cofactor>
    <text evidence="2">Binds 1 phosphopantetheine covalently.</text>
</comment>
<comment type="pathway">
    <text evidence="7">Secondary metabolite biosynthesis.</text>
</comment>
<comment type="domain">
    <text evidence="9">Multidomain protein; including a starter unit:ACP transacylase (SAT) that selects the starter unit, a ketosynthase (KS) that catalyzes repeated decarboxylative condensation to elongate the polyketide backbone, a malonyl-CoA:ACP transacylase (MAT) that selects and transfers the extender unit malonyl-CoA, a product template (PT) domain that controls the immediate cyclization regioselectivity of the reactive polyketide backbone, an acyl-carrier protein (ACP) that serves as the tether of the growing and completed polyketide via its phosphopantetheinyl arm, a methyltransferase domain and a reductive NADPH-binding domain that is required for NADPH-dependent product release.</text>
</comment>
<comment type="disruption phenotype">
    <text evidence="7">Abolishes the production of nigerpyrone, carbonarone A and pestalamide A.</text>
</comment>
<feature type="chain" id="PRO_0000446154" description="Non-reducing polyketide synthase epaA">
    <location>
        <begin position="1"/>
        <end position="2617"/>
    </location>
</feature>
<feature type="domain" description="Ketosynthase family 3 (KS3)" evidence="4 9">
    <location>
        <begin position="372"/>
        <end position="790"/>
    </location>
</feature>
<feature type="domain" description="PKS/mFAS DH" evidence="5">
    <location>
        <begin position="1282"/>
        <end position="1591"/>
    </location>
</feature>
<feature type="domain" description="Carrier" evidence="3 9">
    <location>
        <begin position="1653"/>
        <end position="1727"/>
    </location>
</feature>
<feature type="region of interest" description="N-terminal acylcarrier protein transacylase domain (SAT)" evidence="2 9">
    <location>
        <begin position="95"/>
        <end position="231"/>
    </location>
</feature>
<feature type="region of interest" description="Malonyl-CoA:ACP transacylase (MAT) domain" evidence="2 9">
    <location>
        <begin position="902"/>
        <end position="1193"/>
    </location>
</feature>
<feature type="region of interest" description="N-terminal hotdog fold" evidence="5">
    <location>
        <begin position="1282"/>
        <end position="1413"/>
    </location>
</feature>
<feature type="region of interest" description="Product template (PT) domain" evidence="2 9">
    <location>
        <begin position="1310"/>
        <end position="1589"/>
    </location>
</feature>
<feature type="region of interest" description="C-terminal hotdog fold" evidence="5">
    <location>
        <begin position="1443"/>
        <end position="1591"/>
    </location>
</feature>
<feature type="region of interest" description="Disordered" evidence="6">
    <location>
        <begin position="1600"/>
        <end position="1651"/>
    </location>
</feature>
<feature type="region of interest" description="Disordered" evidence="6">
    <location>
        <begin position="1728"/>
        <end position="1799"/>
    </location>
</feature>
<feature type="region of interest" description="Methyltransferase domain" evidence="2 9">
    <location>
        <begin position="1970"/>
        <end position="2158"/>
    </location>
</feature>
<feature type="region of interest" description="NADPH-binding (R) domain" evidence="2 9">
    <location>
        <begin position="2240"/>
        <end position="2485"/>
    </location>
</feature>
<feature type="compositionally biased region" description="Low complexity" evidence="6">
    <location>
        <begin position="1602"/>
        <end position="1619"/>
    </location>
</feature>
<feature type="compositionally biased region" description="Low complexity" evidence="6">
    <location>
        <begin position="1750"/>
        <end position="1766"/>
    </location>
</feature>
<feature type="compositionally biased region" description="Polar residues" evidence="6">
    <location>
        <begin position="1769"/>
        <end position="1785"/>
    </location>
</feature>
<feature type="active site" description="Nucleophile; for transacylase activity" evidence="1">
    <location>
        <position position="132"/>
    </location>
</feature>
<feature type="active site" description="Proton donor/acceptor; for transacylase activity" evidence="1">
    <location>
        <position position="250"/>
    </location>
</feature>
<feature type="active site" description="For beta-ketoacyl synthase activity" evidence="4">
    <location>
        <position position="539"/>
    </location>
</feature>
<feature type="active site" description="For beta-ketoacyl synthase activity" evidence="4">
    <location>
        <position position="674"/>
    </location>
</feature>
<feature type="active site" description="For beta-ketoacyl synthase activity" evidence="4">
    <location>
        <position position="713"/>
    </location>
</feature>
<feature type="active site" description="Proton acceptor; for dehydratase activity" evidence="5">
    <location>
        <position position="1314"/>
    </location>
</feature>
<feature type="active site" description="Proton donor; for dehydratase activity" evidence="5">
    <location>
        <position position="1499"/>
    </location>
</feature>
<feature type="modified residue" description="O-(pantetheine 4'-phosphoryl)serine" evidence="3">
    <location>
        <position position="1687"/>
    </location>
</feature>
<accession>A2QTE9</accession>